<gene>
    <name evidence="1" type="primary">psaJ</name>
    <name type="ordered locus">PMT_1317</name>
</gene>
<name>PSAJ_PROMM</name>
<organism>
    <name type="scientific">Prochlorococcus marinus (strain MIT 9313)</name>
    <dbReference type="NCBI Taxonomy" id="74547"/>
    <lineage>
        <taxon>Bacteria</taxon>
        <taxon>Bacillati</taxon>
        <taxon>Cyanobacteriota</taxon>
        <taxon>Cyanophyceae</taxon>
        <taxon>Synechococcales</taxon>
        <taxon>Prochlorococcaceae</taxon>
        <taxon>Prochlorococcus</taxon>
    </lineage>
</organism>
<evidence type="ECO:0000255" key="1">
    <source>
        <dbReference type="HAMAP-Rule" id="MF_00522"/>
    </source>
</evidence>
<comment type="function">
    <text evidence="1">May help in the organization of the PsaE and PsaF subunits.</text>
</comment>
<comment type="subcellular location">
    <subcellularLocation>
        <location evidence="1">Cellular thylakoid membrane</location>
        <topology evidence="1">Single-pass membrane protein</topology>
    </subcellularLocation>
</comment>
<comment type="similarity">
    <text evidence="1">Belongs to the PsaJ family.</text>
</comment>
<protein>
    <recommendedName>
        <fullName evidence="1">Photosystem I reaction center subunit IX</fullName>
    </recommendedName>
</protein>
<keyword id="KW-0472">Membrane</keyword>
<keyword id="KW-0602">Photosynthesis</keyword>
<keyword id="KW-0603">Photosystem I</keyword>
<keyword id="KW-1185">Reference proteome</keyword>
<keyword id="KW-0793">Thylakoid</keyword>
<keyword id="KW-0812">Transmembrane</keyword>
<keyword id="KW-1133">Transmembrane helix</keyword>
<sequence>MRKFFESWPMAAVLWVWLTAGIIVEFNRFYPDLLFHPMGL</sequence>
<accession>Q7V658</accession>
<dbReference type="EMBL" id="BX548175">
    <property type="protein sequence ID" value="CAE21492.1"/>
    <property type="molecule type" value="Genomic_DNA"/>
</dbReference>
<dbReference type="RefSeq" id="WP_011130685.1">
    <property type="nucleotide sequence ID" value="NC_005071.1"/>
</dbReference>
<dbReference type="SMR" id="Q7V658"/>
<dbReference type="KEGG" id="pmt:PMT_1317"/>
<dbReference type="eggNOG" id="ENOG5033A5A">
    <property type="taxonomic scope" value="Bacteria"/>
</dbReference>
<dbReference type="HOGENOM" id="CLU_212133_1_1_3"/>
<dbReference type="OrthoDB" id="532702at2"/>
<dbReference type="Proteomes" id="UP000001423">
    <property type="component" value="Chromosome"/>
</dbReference>
<dbReference type="GO" id="GO:0009522">
    <property type="term" value="C:photosystem I"/>
    <property type="evidence" value="ECO:0007669"/>
    <property type="project" value="UniProtKB-KW"/>
</dbReference>
<dbReference type="GO" id="GO:0031676">
    <property type="term" value="C:plasma membrane-derived thylakoid membrane"/>
    <property type="evidence" value="ECO:0007669"/>
    <property type="project" value="UniProtKB-SubCell"/>
</dbReference>
<dbReference type="GO" id="GO:0015979">
    <property type="term" value="P:photosynthesis"/>
    <property type="evidence" value="ECO:0007669"/>
    <property type="project" value="UniProtKB-UniRule"/>
</dbReference>
<dbReference type="Gene3D" id="1.20.5.510">
    <property type="entry name" value="Single helix bin"/>
    <property type="match status" value="1"/>
</dbReference>
<dbReference type="HAMAP" id="MF_00522">
    <property type="entry name" value="PSI_PsaJ"/>
    <property type="match status" value="1"/>
</dbReference>
<dbReference type="InterPro" id="IPR002615">
    <property type="entry name" value="PSI_PsaJ"/>
</dbReference>
<dbReference type="InterPro" id="IPR036062">
    <property type="entry name" value="PSI_PsaJ_sf"/>
</dbReference>
<dbReference type="NCBIfam" id="NF002743">
    <property type="entry name" value="PRK02733.1"/>
    <property type="match status" value="1"/>
</dbReference>
<dbReference type="Pfam" id="PF01701">
    <property type="entry name" value="PSI_PsaJ"/>
    <property type="match status" value="1"/>
</dbReference>
<dbReference type="SUPFAM" id="SSF81544">
    <property type="entry name" value="Subunit IX of photosystem I reaction centre, PsaJ"/>
    <property type="match status" value="1"/>
</dbReference>
<reference key="1">
    <citation type="journal article" date="2003" name="Nature">
        <title>Genome divergence in two Prochlorococcus ecotypes reflects oceanic niche differentiation.</title>
        <authorList>
            <person name="Rocap G."/>
            <person name="Larimer F.W."/>
            <person name="Lamerdin J.E."/>
            <person name="Malfatti S."/>
            <person name="Chain P."/>
            <person name="Ahlgren N.A."/>
            <person name="Arellano A."/>
            <person name="Coleman M."/>
            <person name="Hauser L."/>
            <person name="Hess W.R."/>
            <person name="Johnson Z.I."/>
            <person name="Land M.L."/>
            <person name="Lindell D."/>
            <person name="Post A.F."/>
            <person name="Regala W."/>
            <person name="Shah M."/>
            <person name="Shaw S.L."/>
            <person name="Steglich C."/>
            <person name="Sullivan M.B."/>
            <person name="Ting C.S."/>
            <person name="Tolonen A."/>
            <person name="Webb E.A."/>
            <person name="Zinser E.R."/>
            <person name="Chisholm S.W."/>
        </authorList>
    </citation>
    <scope>NUCLEOTIDE SEQUENCE [LARGE SCALE GENOMIC DNA]</scope>
    <source>
        <strain>MIT 9313</strain>
    </source>
</reference>
<proteinExistence type="inferred from homology"/>
<feature type="chain" id="PRO_0000354116" description="Photosystem I reaction center subunit IX">
    <location>
        <begin position="1"/>
        <end position="40"/>
    </location>
</feature>
<feature type="transmembrane region" description="Helical" evidence="1">
    <location>
        <begin position="4"/>
        <end position="24"/>
    </location>
</feature>